<name>KAD_ALLAM</name>
<sequence>MRLILLGPPGAGKGTQAQRIVDKYGIPQLSTGDMLRAAVSAQTEVGKRAKAVMDAGKLVSDDIVIAIVSERIDQDDCSNGFILDGFPRTLIQADATEKMLAVKGLELSAVVEIRVEDEILADRIAGRYTCANCGTGYHDENLKPKVEGVCDKCGSTHFKRRPDDNRDTVKTRLQAYYKETSPLIGYYYAKGKLHSVDGMAEIDQVTAEIETVLSGL</sequence>
<accession>B9JVQ8</accession>
<comment type="function">
    <text evidence="1">Catalyzes the reversible transfer of the terminal phosphate group between ATP and AMP. Plays an important role in cellular energy homeostasis and in adenine nucleotide metabolism.</text>
</comment>
<comment type="catalytic activity">
    <reaction evidence="1">
        <text>AMP + ATP = 2 ADP</text>
        <dbReference type="Rhea" id="RHEA:12973"/>
        <dbReference type="ChEBI" id="CHEBI:30616"/>
        <dbReference type="ChEBI" id="CHEBI:456215"/>
        <dbReference type="ChEBI" id="CHEBI:456216"/>
        <dbReference type="EC" id="2.7.4.3"/>
    </reaction>
</comment>
<comment type="pathway">
    <text evidence="1">Purine metabolism; AMP biosynthesis via salvage pathway; AMP from ADP: step 1/1.</text>
</comment>
<comment type="subunit">
    <text evidence="1">Monomer.</text>
</comment>
<comment type="subcellular location">
    <subcellularLocation>
        <location evidence="1">Cytoplasm</location>
    </subcellularLocation>
</comment>
<comment type="domain">
    <text evidence="1">Consists of three domains, a large central CORE domain and two small peripheral domains, NMPbind and LID, which undergo movements during catalysis. The LID domain closes over the site of phosphoryl transfer upon ATP binding. Assembling and dissambling the active center during each catalytic cycle provides an effective means to prevent ATP hydrolysis. Some bacteria have evolved a zinc-coordinating structure that stabilizes the LID domain.</text>
</comment>
<comment type="similarity">
    <text evidence="1">Belongs to the adenylate kinase family.</text>
</comment>
<reference key="1">
    <citation type="journal article" date="2009" name="J. Bacteriol.">
        <title>Genome sequences of three Agrobacterium biovars help elucidate the evolution of multichromosome genomes in bacteria.</title>
        <authorList>
            <person name="Slater S.C."/>
            <person name="Goldman B.S."/>
            <person name="Goodner B."/>
            <person name="Setubal J.C."/>
            <person name="Farrand S.K."/>
            <person name="Nester E.W."/>
            <person name="Burr T.J."/>
            <person name="Banta L."/>
            <person name="Dickerman A.W."/>
            <person name="Paulsen I."/>
            <person name="Otten L."/>
            <person name="Suen G."/>
            <person name="Welch R."/>
            <person name="Almeida N.F."/>
            <person name="Arnold F."/>
            <person name="Burton O.T."/>
            <person name="Du Z."/>
            <person name="Ewing A."/>
            <person name="Godsy E."/>
            <person name="Heisel S."/>
            <person name="Houmiel K.L."/>
            <person name="Jhaveri J."/>
            <person name="Lu J."/>
            <person name="Miller N.M."/>
            <person name="Norton S."/>
            <person name="Chen Q."/>
            <person name="Phoolcharoen W."/>
            <person name="Ohlin V."/>
            <person name="Ondrusek D."/>
            <person name="Pride N."/>
            <person name="Stricklin S.L."/>
            <person name="Sun J."/>
            <person name="Wheeler C."/>
            <person name="Wilson L."/>
            <person name="Zhu H."/>
            <person name="Wood D.W."/>
        </authorList>
    </citation>
    <scope>NUCLEOTIDE SEQUENCE [LARGE SCALE GENOMIC DNA]</scope>
    <source>
        <strain>ATCC BAA-846 / DSM 112012 / S4</strain>
    </source>
</reference>
<gene>
    <name evidence="1" type="primary">adk</name>
    <name type="ordered locus">Avi_1864</name>
</gene>
<keyword id="KW-0067">ATP-binding</keyword>
<keyword id="KW-0963">Cytoplasm</keyword>
<keyword id="KW-0418">Kinase</keyword>
<keyword id="KW-0479">Metal-binding</keyword>
<keyword id="KW-0545">Nucleotide biosynthesis</keyword>
<keyword id="KW-0547">Nucleotide-binding</keyword>
<keyword id="KW-1185">Reference proteome</keyword>
<keyword id="KW-0808">Transferase</keyword>
<keyword id="KW-0862">Zinc</keyword>
<proteinExistence type="inferred from homology"/>
<organism>
    <name type="scientific">Allorhizobium ampelinum (strain ATCC BAA-846 / DSM 112012 / S4)</name>
    <name type="common">Agrobacterium vitis (strain S4)</name>
    <dbReference type="NCBI Taxonomy" id="311402"/>
    <lineage>
        <taxon>Bacteria</taxon>
        <taxon>Pseudomonadati</taxon>
        <taxon>Pseudomonadota</taxon>
        <taxon>Alphaproteobacteria</taxon>
        <taxon>Hyphomicrobiales</taxon>
        <taxon>Rhizobiaceae</taxon>
        <taxon>Rhizobium/Agrobacterium group</taxon>
        <taxon>Allorhizobium</taxon>
        <taxon>Allorhizobium ampelinum</taxon>
    </lineage>
</organism>
<evidence type="ECO:0000255" key="1">
    <source>
        <dbReference type="HAMAP-Rule" id="MF_00235"/>
    </source>
</evidence>
<dbReference type="EC" id="2.7.4.3" evidence="1"/>
<dbReference type="EMBL" id="CP000633">
    <property type="protein sequence ID" value="ACM36338.1"/>
    <property type="molecule type" value="Genomic_DNA"/>
</dbReference>
<dbReference type="RefSeq" id="WP_015915759.1">
    <property type="nucleotide sequence ID" value="NC_011989.1"/>
</dbReference>
<dbReference type="SMR" id="B9JVQ8"/>
<dbReference type="STRING" id="311402.Avi_1864"/>
<dbReference type="KEGG" id="avi:Avi_1864"/>
<dbReference type="eggNOG" id="COG0563">
    <property type="taxonomic scope" value="Bacteria"/>
</dbReference>
<dbReference type="HOGENOM" id="CLU_032354_1_2_5"/>
<dbReference type="UniPathway" id="UPA00588">
    <property type="reaction ID" value="UER00649"/>
</dbReference>
<dbReference type="Proteomes" id="UP000001596">
    <property type="component" value="Chromosome 1"/>
</dbReference>
<dbReference type="GO" id="GO:0005737">
    <property type="term" value="C:cytoplasm"/>
    <property type="evidence" value="ECO:0007669"/>
    <property type="project" value="UniProtKB-SubCell"/>
</dbReference>
<dbReference type="GO" id="GO:0004017">
    <property type="term" value="F:adenylate kinase activity"/>
    <property type="evidence" value="ECO:0007669"/>
    <property type="project" value="UniProtKB-UniRule"/>
</dbReference>
<dbReference type="GO" id="GO:0005524">
    <property type="term" value="F:ATP binding"/>
    <property type="evidence" value="ECO:0007669"/>
    <property type="project" value="UniProtKB-UniRule"/>
</dbReference>
<dbReference type="GO" id="GO:0008270">
    <property type="term" value="F:zinc ion binding"/>
    <property type="evidence" value="ECO:0007669"/>
    <property type="project" value="UniProtKB-UniRule"/>
</dbReference>
<dbReference type="GO" id="GO:0044209">
    <property type="term" value="P:AMP salvage"/>
    <property type="evidence" value="ECO:0007669"/>
    <property type="project" value="UniProtKB-UniRule"/>
</dbReference>
<dbReference type="CDD" id="cd01428">
    <property type="entry name" value="ADK"/>
    <property type="match status" value="1"/>
</dbReference>
<dbReference type="FunFam" id="3.40.50.300:FF:000106">
    <property type="entry name" value="Adenylate kinase mitochondrial"/>
    <property type="match status" value="1"/>
</dbReference>
<dbReference type="Gene3D" id="3.40.50.300">
    <property type="entry name" value="P-loop containing nucleotide triphosphate hydrolases"/>
    <property type="match status" value="1"/>
</dbReference>
<dbReference type="HAMAP" id="MF_00235">
    <property type="entry name" value="Adenylate_kinase_Adk"/>
    <property type="match status" value="1"/>
</dbReference>
<dbReference type="InterPro" id="IPR006259">
    <property type="entry name" value="Adenyl_kin_sub"/>
</dbReference>
<dbReference type="InterPro" id="IPR000850">
    <property type="entry name" value="Adenylat/UMP-CMP_kin"/>
</dbReference>
<dbReference type="InterPro" id="IPR033690">
    <property type="entry name" value="Adenylat_kinase_CS"/>
</dbReference>
<dbReference type="InterPro" id="IPR007862">
    <property type="entry name" value="Adenylate_kinase_lid-dom"/>
</dbReference>
<dbReference type="InterPro" id="IPR027417">
    <property type="entry name" value="P-loop_NTPase"/>
</dbReference>
<dbReference type="NCBIfam" id="TIGR01351">
    <property type="entry name" value="adk"/>
    <property type="match status" value="1"/>
</dbReference>
<dbReference type="NCBIfam" id="NF001380">
    <property type="entry name" value="PRK00279.1-2"/>
    <property type="match status" value="1"/>
</dbReference>
<dbReference type="NCBIfam" id="NF001381">
    <property type="entry name" value="PRK00279.1-3"/>
    <property type="match status" value="1"/>
</dbReference>
<dbReference type="NCBIfam" id="NF011100">
    <property type="entry name" value="PRK14527.1"/>
    <property type="match status" value="1"/>
</dbReference>
<dbReference type="PANTHER" id="PTHR23359">
    <property type="entry name" value="NUCLEOTIDE KINASE"/>
    <property type="match status" value="1"/>
</dbReference>
<dbReference type="Pfam" id="PF00406">
    <property type="entry name" value="ADK"/>
    <property type="match status" value="1"/>
</dbReference>
<dbReference type="Pfam" id="PF05191">
    <property type="entry name" value="ADK_lid"/>
    <property type="match status" value="1"/>
</dbReference>
<dbReference type="PRINTS" id="PR00094">
    <property type="entry name" value="ADENYLTKNASE"/>
</dbReference>
<dbReference type="SUPFAM" id="SSF52540">
    <property type="entry name" value="P-loop containing nucleoside triphosphate hydrolases"/>
    <property type="match status" value="1"/>
</dbReference>
<dbReference type="PROSITE" id="PS00113">
    <property type="entry name" value="ADENYLATE_KINASE"/>
    <property type="match status" value="1"/>
</dbReference>
<feature type="chain" id="PRO_1000191117" description="Adenylate kinase">
    <location>
        <begin position="1"/>
        <end position="216"/>
    </location>
</feature>
<feature type="region of interest" description="NMP" evidence="1">
    <location>
        <begin position="30"/>
        <end position="59"/>
    </location>
</feature>
<feature type="region of interest" description="LID" evidence="1">
    <location>
        <begin position="126"/>
        <end position="163"/>
    </location>
</feature>
<feature type="binding site" evidence="1">
    <location>
        <begin position="10"/>
        <end position="15"/>
    </location>
    <ligand>
        <name>ATP</name>
        <dbReference type="ChEBI" id="CHEBI:30616"/>
    </ligand>
</feature>
<feature type="binding site" evidence="1">
    <location>
        <position position="31"/>
    </location>
    <ligand>
        <name>AMP</name>
        <dbReference type="ChEBI" id="CHEBI:456215"/>
    </ligand>
</feature>
<feature type="binding site" evidence="1">
    <location>
        <position position="36"/>
    </location>
    <ligand>
        <name>AMP</name>
        <dbReference type="ChEBI" id="CHEBI:456215"/>
    </ligand>
</feature>
<feature type="binding site" evidence="1">
    <location>
        <begin position="57"/>
        <end position="59"/>
    </location>
    <ligand>
        <name>AMP</name>
        <dbReference type="ChEBI" id="CHEBI:456215"/>
    </ligand>
</feature>
<feature type="binding site" evidence="1">
    <location>
        <begin position="85"/>
        <end position="88"/>
    </location>
    <ligand>
        <name>AMP</name>
        <dbReference type="ChEBI" id="CHEBI:456215"/>
    </ligand>
</feature>
<feature type="binding site" evidence="1">
    <location>
        <position position="92"/>
    </location>
    <ligand>
        <name>AMP</name>
        <dbReference type="ChEBI" id="CHEBI:456215"/>
    </ligand>
</feature>
<feature type="binding site" evidence="1">
    <location>
        <position position="127"/>
    </location>
    <ligand>
        <name>ATP</name>
        <dbReference type="ChEBI" id="CHEBI:30616"/>
    </ligand>
</feature>
<feature type="binding site" evidence="1">
    <location>
        <position position="130"/>
    </location>
    <ligand>
        <name>Zn(2+)</name>
        <dbReference type="ChEBI" id="CHEBI:29105"/>
        <note>structural</note>
    </ligand>
</feature>
<feature type="binding site" evidence="1">
    <location>
        <position position="133"/>
    </location>
    <ligand>
        <name>Zn(2+)</name>
        <dbReference type="ChEBI" id="CHEBI:29105"/>
        <note>structural</note>
    </ligand>
</feature>
<feature type="binding site" evidence="1">
    <location>
        <position position="150"/>
    </location>
    <ligand>
        <name>Zn(2+)</name>
        <dbReference type="ChEBI" id="CHEBI:29105"/>
        <note>structural</note>
    </ligand>
</feature>
<feature type="binding site" evidence="1">
    <location>
        <position position="153"/>
    </location>
    <ligand>
        <name>Zn(2+)</name>
        <dbReference type="ChEBI" id="CHEBI:29105"/>
        <note>structural</note>
    </ligand>
</feature>
<feature type="binding site" evidence="1">
    <location>
        <position position="160"/>
    </location>
    <ligand>
        <name>AMP</name>
        <dbReference type="ChEBI" id="CHEBI:456215"/>
    </ligand>
</feature>
<feature type="binding site" evidence="1">
    <location>
        <position position="172"/>
    </location>
    <ligand>
        <name>AMP</name>
        <dbReference type="ChEBI" id="CHEBI:456215"/>
    </ligand>
</feature>
<feature type="binding site" evidence="1">
    <location>
        <position position="200"/>
    </location>
    <ligand>
        <name>ATP</name>
        <dbReference type="ChEBI" id="CHEBI:30616"/>
    </ligand>
</feature>
<protein>
    <recommendedName>
        <fullName evidence="1">Adenylate kinase</fullName>
        <shortName evidence="1">AK</shortName>
        <ecNumber evidence="1">2.7.4.3</ecNumber>
    </recommendedName>
    <alternativeName>
        <fullName evidence="1">ATP-AMP transphosphorylase</fullName>
    </alternativeName>
    <alternativeName>
        <fullName evidence="1">ATP:AMP phosphotransferase</fullName>
    </alternativeName>
    <alternativeName>
        <fullName evidence="1">Adenylate monophosphate kinase</fullName>
    </alternativeName>
</protein>